<dbReference type="EMBL" id="EF044213">
    <property type="protein sequence ID" value="ABJ89736.1"/>
    <property type="molecule type" value="Genomic_DNA"/>
</dbReference>
<dbReference type="RefSeq" id="YP_817539.1">
    <property type="nucleotide sequence ID" value="NC_008535.1"/>
</dbReference>
<dbReference type="SMR" id="A0A392"/>
<dbReference type="GeneID" id="4421858"/>
<dbReference type="OrthoDB" id="441444at2759"/>
<dbReference type="Proteomes" id="UP000515148">
    <property type="component" value="Chloroplast Pltd"/>
</dbReference>
<dbReference type="GO" id="GO:0009507">
    <property type="term" value="C:chloroplast"/>
    <property type="evidence" value="ECO:0007669"/>
    <property type="project" value="UniProtKB-SubCell"/>
</dbReference>
<dbReference type="GO" id="GO:1990904">
    <property type="term" value="C:ribonucleoprotein complex"/>
    <property type="evidence" value="ECO:0007669"/>
    <property type="project" value="UniProtKB-KW"/>
</dbReference>
<dbReference type="GO" id="GO:0005840">
    <property type="term" value="C:ribosome"/>
    <property type="evidence" value="ECO:0007669"/>
    <property type="project" value="UniProtKB-KW"/>
</dbReference>
<dbReference type="GO" id="GO:0003735">
    <property type="term" value="F:structural constituent of ribosome"/>
    <property type="evidence" value="ECO:0007669"/>
    <property type="project" value="InterPro"/>
</dbReference>
<dbReference type="GO" id="GO:0006412">
    <property type="term" value="P:translation"/>
    <property type="evidence" value="ECO:0007669"/>
    <property type="project" value="UniProtKB-UniRule"/>
</dbReference>
<dbReference type="CDD" id="cd00353">
    <property type="entry name" value="Ribosomal_S15p_S13e"/>
    <property type="match status" value="1"/>
</dbReference>
<dbReference type="Gene3D" id="1.10.287.10">
    <property type="entry name" value="S15/NS1, RNA-binding"/>
    <property type="match status" value="1"/>
</dbReference>
<dbReference type="HAMAP" id="MF_01343_B">
    <property type="entry name" value="Ribosomal_uS15_B"/>
    <property type="match status" value="1"/>
</dbReference>
<dbReference type="InterPro" id="IPR000589">
    <property type="entry name" value="Ribosomal_uS15"/>
</dbReference>
<dbReference type="InterPro" id="IPR005290">
    <property type="entry name" value="Ribosomal_uS15_bac-type"/>
</dbReference>
<dbReference type="InterPro" id="IPR009068">
    <property type="entry name" value="uS15_NS1_RNA-bd_sf"/>
</dbReference>
<dbReference type="NCBIfam" id="TIGR00952">
    <property type="entry name" value="S15_bact"/>
    <property type="match status" value="1"/>
</dbReference>
<dbReference type="PANTHER" id="PTHR23321">
    <property type="entry name" value="RIBOSOMAL PROTEIN S15, BACTERIAL AND ORGANELLAR"/>
    <property type="match status" value="1"/>
</dbReference>
<dbReference type="PANTHER" id="PTHR23321:SF26">
    <property type="entry name" value="SMALL RIBOSOMAL SUBUNIT PROTEIN US15M"/>
    <property type="match status" value="1"/>
</dbReference>
<dbReference type="Pfam" id="PF00312">
    <property type="entry name" value="Ribosomal_S15"/>
    <property type="match status" value="1"/>
</dbReference>
<dbReference type="SMART" id="SM01387">
    <property type="entry name" value="Ribosomal_S15"/>
    <property type="match status" value="1"/>
</dbReference>
<dbReference type="SUPFAM" id="SSF47060">
    <property type="entry name" value="S15/NS1 RNA-binding domain"/>
    <property type="match status" value="1"/>
</dbReference>
<dbReference type="PROSITE" id="PS00362">
    <property type="entry name" value="RIBOSOMAL_S15"/>
    <property type="match status" value="1"/>
</dbReference>
<protein>
    <recommendedName>
        <fullName evidence="2">Small ribosomal subunit protein uS15c</fullName>
    </recommendedName>
    <alternativeName>
        <fullName>30S ribosomal protein S15, chloroplastic</fullName>
    </alternativeName>
</protein>
<reference key="1">
    <citation type="journal article" date="2007" name="Plant Biotechnol. J.">
        <title>The complete nucleotide sequence of the coffee (Coffea arabica L.) chloroplast genome: organization and implications for biotechnology and phylogenetic relationships amongst angiosperms.</title>
        <authorList>
            <person name="Samson N."/>
            <person name="Bausher M.G."/>
            <person name="Lee S.-B."/>
            <person name="Jansen R.K."/>
            <person name="Daniell H."/>
        </authorList>
    </citation>
    <scope>NUCLEOTIDE SEQUENCE [LARGE SCALE GENOMIC DNA]</scope>
</reference>
<name>RR15_COFAR</name>
<keyword id="KW-0150">Chloroplast</keyword>
<keyword id="KW-0934">Plastid</keyword>
<keyword id="KW-1185">Reference proteome</keyword>
<keyword id="KW-0687">Ribonucleoprotein</keyword>
<keyword id="KW-0689">Ribosomal protein</keyword>
<geneLocation type="chloroplast"/>
<evidence type="ECO:0000250" key="1"/>
<evidence type="ECO:0000305" key="2"/>
<accession>A0A392</accession>
<sequence length="87" mass="10428">MVKNTLISVISEEEKRGSVEFQVFRFTNKIRRLTSHLELHKKDYLSQRGLRKILGKRQRLLAYLAKKNRVRYKELIGLLSIRETKTR</sequence>
<gene>
    <name type="primary">rps15</name>
</gene>
<proteinExistence type="inferred from homology"/>
<comment type="subunit">
    <text evidence="1">Part of the 30S ribosomal subunit.</text>
</comment>
<comment type="subcellular location">
    <subcellularLocation>
        <location>Plastid</location>
        <location>Chloroplast</location>
    </subcellularLocation>
</comment>
<comment type="similarity">
    <text evidence="2">Belongs to the universal ribosomal protein uS15 family.</text>
</comment>
<feature type="chain" id="PRO_0000276970" description="Small ribosomal subunit protein uS15c">
    <location>
        <begin position="1"/>
        <end position="87"/>
    </location>
</feature>
<organism>
    <name type="scientific">Coffea arabica</name>
    <name type="common">Arabian coffee</name>
    <dbReference type="NCBI Taxonomy" id="13443"/>
    <lineage>
        <taxon>Eukaryota</taxon>
        <taxon>Viridiplantae</taxon>
        <taxon>Streptophyta</taxon>
        <taxon>Embryophyta</taxon>
        <taxon>Tracheophyta</taxon>
        <taxon>Spermatophyta</taxon>
        <taxon>Magnoliopsida</taxon>
        <taxon>eudicotyledons</taxon>
        <taxon>Gunneridae</taxon>
        <taxon>Pentapetalae</taxon>
        <taxon>asterids</taxon>
        <taxon>lamiids</taxon>
        <taxon>Gentianales</taxon>
        <taxon>Rubiaceae</taxon>
        <taxon>Ixoroideae</taxon>
        <taxon>Gardenieae complex</taxon>
        <taxon>Bertiereae - Coffeeae clade</taxon>
        <taxon>Coffeeae</taxon>
        <taxon>Coffea</taxon>
    </lineage>
</organism>